<name>DUT_GLAP5</name>
<keyword id="KW-0378">Hydrolase</keyword>
<keyword id="KW-0460">Magnesium</keyword>
<keyword id="KW-0479">Metal-binding</keyword>
<keyword id="KW-0546">Nucleotide metabolism</keyword>
<keyword id="KW-1185">Reference proteome</keyword>
<protein>
    <recommendedName>
        <fullName evidence="1">Deoxyuridine 5'-triphosphate nucleotidohydrolase</fullName>
        <shortName evidence="1">dUTPase</shortName>
        <ecNumber evidence="1">3.6.1.23</ecNumber>
    </recommendedName>
    <alternativeName>
        <fullName evidence="1">dUTP pyrophosphatase</fullName>
    </alternativeName>
</protein>
<dbReference type="EC" id="3.6.1.23" evidence="1"/>
<dbReference type="EMBL" id="CP001321">
    <property type="protein sequence ID" value="ACL33506.1"/>
    <property type="molecule type" value="Genomic_DNA"/>
</dbReference>
<dbReference type="RefSeq" id="WP_015940042.1">
    <property type="nucleotide sequence ID" value="NC_011852.1"/>
</dbReference>
<dbReference type="SMR" id="B8F854"/>
<dbReference type="STRING" id="557723.HAPS_2046"/>
<dbReference type="KEGG" id="hap:HAPS_2046"/>
<dbReference type="PATRIC" id="fig|557723.8.peg.2030"/>
<dbReference type="HOGENOM" id="CLU_068508_1_1_6"/>
<dbReference type="UniPathway" id="UPA00610">
    <property type="reaction ID" value="UER00666"/>
</dbReference>
<dbReference type="Proteomes" id="UP000006743">
    <property type="component" value="Chromosome"/>
</dbReference>
<dbReference type="GO" id="GO:0004170">
    <property type="term" value="F:dUTP diphosphatase activity"/>
    <property type="evidence" value="ECO:0007669"/>
    <property type="project" value="UniProtKB-UniRule"/>
</dbReference>
<dbReference type="GO" id="GO:0000287">
    <property type="term" value="F:magnesium ion binding"/>
    <property type="evidence" value="ECO:0007669"/>
    <property type="project" value="UniProtKB-UniRule"/>
</dbReference>
<dbReference type="GO" id="GO:0006226">
    <property type="term" value="P:dUMP biosynthetic process"/>
    <property type="evidence" value="ECO:0007669"/>
    <property type="project" value="UniProtKB-UniRule"/>
</dbReference>
<dbReference type="GO" id="GO:0046081">
    <property type="term" value="P:dUTP catabolic process"/>
    <property type="evidence" value="ECO:0007669"/>
    <property type="project" value="InterPro"/>
</dbReference>
<dbReference type="CDD" id="cd07557">
    <property type="entry name" value="trimeric_dUTPase"/>
    <property type="match status" value="1"/>
</dbReference>
<dbReference type="FunFam" id="2.70.40.10:FF:000002">
    <property type="entry name" value="dUTP diphosphatase"/>
    <property type="match status" value="1"/>
</dbReference>
<dbReference type="Gene3D" id="2.70.40.10">
    <property type="match status" value="1"/>
</dbReference>
<dbReference type="HAMAP" id="MF_00116">
    <property type="entry name" value="dUTPase_bact"/>
    <property type="match status" value="1"/>
</dbReference>
<dbReference type="InterPro" id="IPR008181">
    <property type="entry name" value="dUTPase"/>
</dbReference>
<dbReference type="InterPro" id="IPR029054">
    <property type="entry name" value="dUTPase-like"/>
</dbReference>
<dbReference type="InterPro" id="IPR036157">
    <property type="entry name" value="dUTPase-like_sf"/>
</dbReference>
<dbReference type="InterPro" id="IPR033704">
    <property type="entry name" value="dUTPase_trimeric"/>
</dbReference>
<dbReference type="NCBIfam" id="TIGR00576">
    <property type="entry name" value="dut"/>
    <property type="match status" value="1"/>
</dbReference>
<dbReference type="NCBIfam" id="NF001862">
    <property type="entry name" value="PRK00601.1"/>
    <property type="match status" value="1"/>
</dbReference>
<dbReference type="PANTHER" id="PTHR11241">
    <property type="entry name" value="DEOXYURIDINE 5'-TRIPHOSPHATE NUCLEOTIDOHYDROLASE"/>
    <property type="match status" value="1"/>
</dbReference>
<dbReference type="PANTHER" id="PTHR11241:SF0">
    <property type="entry name" value="DEOXYURIDINE 5'-TRIPHOSPHATE NUCLEOTIDOHYDROLASE"/>
    <property type="match status" value="1"/>
</dbReference>
<dbReference type="Pfam" id="PF00692">
    <property type="entry name" value="dUTPase"/>
    <property type="match status" value="1"/>
</dbReference>
<dbReference type="SUPFAM" id="SSF51283">
    <property type="entry name" value="dUTPase-like"/>
    <property type="match status" value="1"/>
</dbReference>
<gene>
    <name evidence="1" type="primary">dut</name>
    <name type="ordered locus">HAPS_2046</name>
</gene>
<proteinExistence type="inferred from homology"/>
<evidence type="ECO:0000255" key="1">
    <source>
        <dbReference type="HAMAP-Rule" id="MF_00116"/>
    </source>
</evidence>
<feature type="chain" id="PRO_1000119238" description="Deoxyuridine 5'-triphosphate nucleotidohydrolase">
    <location>
        <begin position="1"/>
        <end position="151"/>
    </location>
</feature>
<feature type="binding site" evidence="1">
    <location>
        <begin position="70"/>
        <end position="72"/>
    </location>
    <ligand>
        <name>substrate</name>
    </ligand>
</feature>
<feature type="binding site" evidence="1">
    <location>
        <position position="83"/>
    </location>
    <ligand>
        <name>substrate</name>
    </ligand>
</feature>
<feature type="binding site" evidence="1">
    <location>
        <begin position="87"/>
        <end position="89"/>
    </location>
    <ligand>
        <name>substrate</name>
    </ligand>
</feature>
<feature type="binding site" evidence="1">
    <location>
        <position position="97"/>
    </location>
    <ligand>
        <name>substrate</name>
    </ligand>
</feature>
<reference key="1">
    <citation type="journal article" date="2009" name="J. Bacteriol.">
        <title>Complete genome sequence of Haemophilus parasuis SH0165.</title>
        <authorList>
            <person name="Yue M."/>
            <person name="Yang F."/>
            <person name="Yang J."/>
            <person name="Bei W."/>
            <person name="Cai X."/>
            <person name="Chen L."/>
            <person name="Dong J."/>
            <person name="Zhou R."/>
            <person name="Jin M."/>
            <person name="Jin Q."/>
            <person name="Chen H."/>
        </authorList>
    </citation>
    <scope>NUCLEOTIDE SEQUENCE [LARGE SCALE GENOMIC DNA]</scope>
    <source>
        <strain>SH0165</strain>
    </source>
</reference>
<comment type="function">
    <text evidence="1">This enzyme is involved in nucleotide metabolism: it produces dUMP, the immediate precursor of thymidine nucleotides and it decreases the intracellular concentration of dUTP so that uracil cannot be incorporated into DNA.</text>
</comment>
<comment type="catalytic activity">
    <reaction evidence="1">
        <text>dUTP + H2O = dUMP + diphosphate + H(+)</text>
        <dbReference type="Rhea" id="RHEA:10248"/>
        <dbReference type="ChEBI" id="CHEBI:15377"/>
        <dbReference type="ChEBI" id="CHEBI:15378"/>
        <dbReference type="ChEBI" id="CHEBI:33019"/>
        <dbReference type="ChEBI" id="CHEBI:61555"/>
        <dbReference type="ChEBI" id="CHEBI:246422"/>
        <dbReference type="EC" id="3.6.1.23"/>
    </reaction>
</comment>
<comment type="cofactor">
    <cofactor evidence="1">
        <name>Mg(2+)</name>
        <dbReference type="ChEBI" id="CHEBI:18420"/>
    </cofactor>
</comment>
<comment type="pathway">
    <text evidence="1">Pyrimidine metabolism; dUMP biosynthesis; dUMP from dCTP (dUTP route): step 2/2.</text>
</comment>
<comment type="similarity">
    <text evidence="1">Belongs to the dUTPase family.</text>
</comment>
<sequence length="151" mass="16214">MKQIDLKILDKRIGTEFPLPTYATTGSAGLDLRALIEQPLTVEAGQTVLIPTGISVYIADPNLAAVILPRSGLGHKNGIVLGNLIGLIDSDYQGPLMVSLWNRSDKPFTVEVGDRIAQLVFVPVVQAQFNIVEEFTATDRGEGGFGHSGKQ</sequence>
<organism>
    <name type="scientific">Glaesserella parasuis serovar 5 (strain SH0165)</name>
    <name type="common">Haemophilus parasuis</name>
    <dbReference type="NCBI Taxonomy" id="557723"/>
    <lineage>
        <taxon>Bacteria</taxon>
        <taxon>Pseudomonadati</taxon>
        <taxon>Pseudomonadota</taxon>
        <taxon>Gammaproteobacteria</taxon>
        <taxon>Pasteurellales</taxon>
        <taxon>Pasteurellaceae</taxon>
        <taxon>Glaesserella</taxon>
    </lineage>
</organism>
<accession>B8F854</accession>